<feature type="chain" id="PRO_1000114375" description="Protein RecA">
    <location>
        <begin position="1"/>
        <end position="388"/>
    </location>
</feature>
<feature type="region of interest" description="Disordered" evidence="2">
    <location>
        <begin position="347"/>
        <end position="372"/>
    </location>
</feature>
<feature type="compositionally biased region" description="Basic and acidic residues" evidence="2">
    <location>
        <begin position="357"/>
        <end position="369"/>
    </location>
</feature>
<feature type="binding site" evidence="1">
    <location>
        <begin position="79"/>
        <end position="86"/>
    </location>
    <ligand>
        <name>ATP</name>
        <dbReference type="ChEBI" id="CHEBI:30616"/>
    </ligand>
</feature>
<comment type="function">
    <text evidence="1">Can catalyze the hydrolysis of ATP in the presence of single-stranded DNA, the ATP-dependent uptake of single-stranded DNA by duplex DNA, and the ATP-dependent hybridization of homologous single-stranded DNAs. It interacts with LexA causing its activation and leading to its autocatalytic cleavage.</text>
</comment>
<comment type="subcellular location">
    <subcellularLocation>
        <location evidence="1">Cytoplasm</location>
    </subcellularLocation>
</comment>
<comment type="similarity">
    <text evidence="1">Belongs to the RecA family.</text>
</comment>
<gene>
    <name evidence="1" type="primary">recA</name>
    <name type="ordered locus">SPCG_1913</name>
</gene>
<evidence type="ECO:0000255" key="1">
    <source>
        <dbReference type="HAMAP-Rule" id="MF_00268"/>
    </source>
</evidence>
<evidence type="ECO:0000256" key="2">
    <source>
        <dbReference type="SAM" id="MobiDB-lite"/>
    </source>
</evidence>
<reference key="1">
    <citation type="journal article" date="2009" name="BMC Genomics">
        <title>Genome evolution driven by host adaptations results in a more virulent and antimicrobial-resistant Streptococcus pneumoniae serotype 14.</title>
        <authorList>
            <person name="Ding F."/>
            <person name="Tang P."/>
            <person name="Hsu M.-H."/>
            <person name="Cui P."/>
            <person name="Hu S."/>
            <person name="Yu J."/>
            <person name="Chiu C.-H."/>
        </authorList>
    </citation>
    <scope>NUCLEOTIDE SEQUENCE [LARGE SCALE GENOMIC DNA]</scope>
    <source>
        <strain>CGSP14</strain>
    </source>
</reference>
<protein>
    <recommendedName>
        <fullName evidence="1">Protein RecA</fullName>
    </recommendedName>
    <alternativeName>
        <fullName evidence="1">Recombinase A</fullName>
    </alternativeName>
</protein>
<sequence length="388" mass="41954">MAKKPKKLEEISKKFGAEREKALNDALKLIEKDFGKGSIMRLGERAEQKVQVMSSGSLALDIALGSGGYPKGRIIEIYGPESSGKTTVALHAVAQAQKEGGIAAFIDAEHALDPAYAAALGVNIDELLLSQPDSGEQGLEIAGKLIDSGAVDLVVVDSVAALVPRAEIDGDIGDSHVGLQARMMSQAMRKLGASINKTKTIAIFINQLREKVGVMFGNPETTPGGRALKFYASVRLDVRGNTQIKGTGDQKETNVGKETKIKVVKNKVAPPFKEAVVEIMYGEGISKTGELLKIASDLDIIKKAGAWYSYKDEKIGQGSENAKKYLAEHPEIFDEIDKQVRSKFGLIDGEEVSEQDTENKKDEPKKEEAVNEEVTLDLGDELEIEIEE</sequence>
<keyword id="KW-0067">ATP-binding</keyword>
<keyword id="KW-0963">Cytoplasm</keyword>
<keyword id="KW-0227">DNA damage</keyword>
<keyword id="KW-0233">DNA recombination</keyword>
<keyword id="KW-0234">DNA repair</keyword>
<keyword id="KW-0238">DNA-binding</keyword>
<keyword id="KW-0547">Nucleotide-binding</keyword>
<keyword id="KW-0742">SOS response</keyword>
<proteinExistence type="inferred from homology"/>
<organism>
    <name type="scientific">Streptococcus pneumoniae (strain CGSP14)</name>
    <dbReference type="NCBI Taxonomy" id="516950"/>
    <lineage>
        <taxon>Bacteria</taxon>
        <taxon>Bacillati</taxon>
        <taxon>Bacillota</taxon>
        <taxon>Bacilli</taxon>
        <taxon>Lactobacillales</taxon>
        <taxon>Streptococcaceae</taxon>
        <taxon>Streptococcus</taxon>
    </lineage>
</organism>
<dbReference type="EMBL" id="CP001033">
    <property type="protein sequence ID" value="ACB91166.1"/>
    <property type="molecule type" value="Genomic_DNA"/>
</dbReference>
<dbReference type="RefSeq" id="WP_001085463.1">
    <property type="nucleotide sequence ID" value="NC_010582.1"/>
</dbReference>
<dbReference type="SMR" id="B2IM28"/>
<dbReference type="KEGG" id="spw:SPCG_1913"/>
<dbReference type="HOGENOM" id="CLU_040469_3_2_9"/>
<dbReference type="GO" id="GO:0005829">
    <property type="term" value="C:cytosol"/>
    <property type="evidence" value="ECO:0007669"/>
    <property type="project" value="TreeGrafter"/>
</dbReference>
<dbReference type="GO" id="GO:0005524">
    <property type="term" value="F:ATP binding"/>
    <property type="evidence" value="ECO:0007669"/>
    <property type="project" value="UniProtKB-UniRule"/>
</dbReference>
<dbReference type="GO" id="GO:0016887">
    <property type="term" value="F:ATP hydrolysis activity"/>
    <property type="evidence" value="ECO:0007669"/>
    <property type="project" value="InterPro"/>
</dbReference>
<dbReference type="GO" id="GO:0140664">
    <property type="term" value="F:ATP-dependent DNA damage sensor activity"/>
    <property type="evidence" value="ECO:0007669"/>
    <property type="project" value="InterPro"/>
</dbReference>
<dbReference type="GO" id="GO:0003684">
    <property type="term" value="F:damaged DNA binding"/>
    <property type="evidence" value="ECO:0007669"/>
    <property type="project" value="UniProtKB-UniRule"/>
</dbReference>
<dbReference type="GO" id="GO:0003697">
    <property type="term" value="F:single-stranded DNA binding"/>
    <property type="evidence" value="ECO:0007669"/>
    <property type="project" value="UniProtKB-UniRule"/>
</dbReference>
<dbReference type="GO" id="GO:0006310">
    <property type="term" value="P:DNA recombination"/>
    <property type="evidence" value="ECO:0007669"/>
    <property type="project" value="UniProtKB-UniRule"/>
</dbReference>
<dbReference type="GO" id="GO:0006281">
    <property type="term" value="P:DNA repair"/>
    <property type="evidence" value="ECO:0007669"/>
    <property type="project" value="UniProtKB-UniRule"/>
</dbReference>
<dbReference type="GO" id="GO:0009432">
    <property type="term" value="P:SOS response"/>
    <property type="evidence" value="ECO:0007669"/>
    <property type="project" value="UniProtKB-UniRule"/>
</dbReference>
<dbReference type="CDD" id="cd00983">
    <property type="entry name" value="RecA"/>
    <property type="match status" value="1"/>
</dbReference>
<dbReference type="FunFam" id="3.40.50.300:FF:000087">
    <property type="entry name" value="Recombinase RecA"/>
    <property type="match status" value="1"/>
</dbReference>
<dbReference type="Gene3D" id="3.40.50.300">
    <property type="entry name" value="P-loop containing nucleotide triphosphate hydrolases"/>
    <property type="match status" value="1"/>
</dbReference>
<dbReference type="HAMAP" id="MF_00268">
    <property type="entry name" value="RecA"/>
    <property type="match status" value="1"/>
</dbReference>
<dbReference type="InterPro" id="IPR003593">
    <property type="entry name" value="AAA+_ATPase"/>
</dbReference>
<dbReference type="InterPro" id="IPR013765">
    <property type="entry name" value="DNA_recomb/repair_RecA"/>
</dbReference>
<dbReference type="InterPro" id="IPR020584">
    <property type="entry name" value="DNA_recomb/repair_RecA_CS"/>
</dbReference>
<dbReference type="InterPro" id="IPR027417">
    <property type="entry name" value="P-loop_NTPase"/>
</dbReference>
<dbReference type="InterPro" id="IPR049261">
    <property type="entry name" value="RecA-like_C"/>
</dbReference>
<dbReference type="InterPro" id="IPR049428">
    <property type="entry name" value="RecA-like_N"/>
</dbReference>
<dbReference type="InterPro" id="IPR020588">
    <property type="entry name" value="RecA_ATP-bd"/>
</dbReference>
<dbReference type="InterPro" id="IPR023400">
    <property type="entry name" value="RecA_C_sf"/>
</dbReference>
<dbReference type="InterPro" id="IPR020587">
    <property type="entry name" value="RecA_monomer-monomer_interface"/>
</dbReference>
<dbReference type="NCBIfam" id="TIGR02012">
    <property type="entry name" value="tigrfam_recA"/>
    <property type="match status" value="1"/>
</dbReference>
<dbReference type="PANTHER" id="PTHR45900:SF1">
    <property type="entry name" value="MITOCHONDRIAL DNA REPAIR PROTEIN RECA HOMOLOG-RELATED"/>
    <property type="match status" value="1"/>
</dbReference>
<dbReference type="PANTHER" id="PTHR45900">
    <property type="entry name" value="RECA"/>
    <property type="match status" value="1"/>
</dbReference>
<dbReference type="Pfam" id="PF00154">
    <property type="entry name" value="RecA"/>
    <property type="match status" value="1"/>
</dbReference>
<dbReference type="Pfam" id="PF21096">
    <property type="entry name" value="RecA_C"/>
    <property type="match status" value="1"/>
</dbReference>
<dbReference type="PRINTS" id="PR00142">
    <property type="entry name" value="RECA"/>
</dbReference>
<dbReference type="SMART" id="SM00382">
    <property type="entry name" value="AAA"/>
    <property type="match status" value="1"/>
</dbReference>
<dbReference type="SUPFAM" id="SSF52540">
    <property type="entry name" value="P-loop containing nucleoside triphosphate hydrolases"/>
    <property type="match status" value="1"/>
</dbReference>
<dbReference type="SUPFAM" id="SSF54752">
    <property type="entry name" value="RecA protein, C-terminal domain"/>
    <property type="match status" value="1"/>
</dbReference>
<dbReference type="PROSITE" id="PS00321">
    <property type="entry name" value="RECA_1"/>
    <property type="match status" value="1"/>
</dbReference>
<dbReference type="PROSITE" id="PS50162">
    <property type="entry name" value="RECA_2"/>
    <property type="match status" value="1"/>
</dbReference>
<dbReference type="PROSITE" id="PS50163">
    <property type="entry name" value="RECA_3"/>
    <property type="match status" value="1"/>
</dbReference>
<accession>B2IM28</accession>
<name>RECA_STRPS</name>